<feature type="chain" id="PRO_0000287320" description="Alanine dehydrogenase 1">
    <location>
        <begin position="1"/>
        <end position="372"/>
    </location>
</feature>
<feature type="active site" evidence="2">
    <location>
        <position position="94"/>
    </location>
</feature>
<feature type="binding site" evidence="1">
    <location>
        <begin position="170"/>
        <end position="200"/>
    </location>
    <ligand>
        <name>NAD(+)</name>
        <dbReference type="ChEBI" id="CHEBI:57540"/>
    </ligand>
</feature>
<protein>
    <recommendedName>
        <fullName>Alanine dehydrogenase 1</fullName>
        <ecNumber>1.4.1.1</ecNumber>
    </recommendedName>
</protein>
<gene>
    <name type="primary">ald1</name>
    <name type="ordered locus">SAOUHSC_01452</name>
</gene>
<organism>
    <name type="scientific">Staphylococcus aureus (strain NCTC 8325 / PS 47)</name>
    <dbReference type="NCBI Taxonomy" id="93061"/>
    <lineage>
        <taxon>Bacteria</taxon>
        <taxon>Bacillati</taxon>
        <taxon>Bacillota</taxon>
        <taxon>Bacilli</taxon>
        <taxon>Bacillales</taxon>
        <taxon>Staphylococcaceae</taxon>
        <taxon>Staphylococcus</taxon>
    </lineage>
</organism>
<accession>Q2FYJ2</accession>
<comment type="function">
    <text evidence="1">May play a role in cell wall synthesis as L-alanine is an important constituent of the peptidoglycan layer.</text>
</comment>
<comment type="catalytic activity">
    <reaction>
        <text>L-alanine + NAD(+) + H2O = pyruvate + NH4(+) + NADH + H(+)</text>
        <dbReference type="Rhea" id="RHEA:18405"/>
        <dbReference type="ChEBI" id="CHEBI:15361"/>
        <dbReference type="ChEBI" id="CHEBI:15377"/>
        <dbReference type="ChEBI" id="CHEBI:15378"/>
        <dbReference type="ChEBI" id="CHEBI:28938"/>
        <dbReference type="ChEBI" id="CHEBI:57540"/>
        <dbReference type="ChEBI" id="CHEBI:57945"/>
        <dbReference type="ChEBI" id="CHEBI:57972"/>
        <dbReference type="EC" id="1.4.1.1"/>
    </reaction>
</comment>
<comment type="pathway">
    <text>Amino-acid degradation; L-alanine degradation via dehydrogenase pathway; NH(3) and pyruvate from L-alanine: step 1/1.</text>
</comment>
<comment type="similarity">
    <text evidence="3">Belongs to the AlaDH/PNT family.</text>
</comment>
<keyword id="KW-0520">NAD</keyword>
<keyword id="KW-0560">Oxidoreductase</keyword>
<keyword id="KW-1185">Reference proteome</keyword>
<sequence>MLVAVVKELKQGEGRVACTPENVRKLTDAGHKVIVEKNAGIGSGFSNDMYEKEGAKIVTHEQAWEADLVIKVKEPHESEYQYFKKNQIIWGFLHLASSKEIVEKMQEVGVTAISGETIIKNGKAELLAPMSAIAGQRSAIMGAYYSEAQHGGQGTLVTGVHENVDIPGSTYVIFGGGVAATNAANVALGLNAKVIIIELNDDRIKYLEDMYAEKDVTVVKSTPENLAEQIKKADVFISTILISGAKPPKLVTREMVKSMKKGSVLIDIAIDQGGTIETIRPTTISDPVYEEEGVIHYGVPNQPGAVPRTSTMALAQGNIDYILEICDKGLEQAIKDNEALSTGVNIYQGQVTNQGLASSHDLDYKEILNVIE</sequence>
<reference key="1">
    <citation type="book" date="2006" name="Gram positive pathogens, 2nd edition">
        <title>The Staphylococcus aureus NCTC 8325 genome.</title>
        <editorList>
            <person name="Fischetti V."/>
            <person name="Novick R."/>
            <person name="Ferretti J."/>
            <person name="Portnoy D."/>
            <person name="Rood J."/>
        </editorList>
        <authorList>
            <person name="Gillaspy A.F."/>
            <person name="Worrell V."/>
            <person name="Orvis J."/>
            <person name="Roe B.A."/>
            <person name="Dyer D.W."/>
            <person name="Iandolo J.J."/>
        </authorList>
    </citation>
    <scope>NUCLEOTIDE SEQUENCE [LARGE SCALE GENOMIC DNA]</scope>
    <source>
        <strain>NCTC 8325 / PS 47</strain>
    </source>
</reference>
<name>DHA1_STAA8</name>
<evidence type="ECO:0000250" key="1"/>
<evidence type="ECO:0000255" key="2"/>
<evidence type="ECO:0000305" key="3"/>
<proteinExistence type="inferred from homology"/>
<dbReference type="EC" id="1.4.1.1"/>
<dbReference type="EMBL" id="CP000253">
    <property type="protein sequence ID" value="ABD30540.1"/>
    <property type="molecule type" value="Genomic_DNA"/>
</dbReference>
<dbReference type="RefSeq" id="YP_499973.1">
    <property type="nucleotide sequence ID" value="NC_007795.1"/>
</dbReference>
<dbReference type="SMR" id="Q2FYJ2"/>
<dbReference type="STRING" id="93061.SAOUHSC_01452"/>
<dbReference type="PaxDb" id="1280-SAXN108_1460"/>
<dbReference type="GeneID" id="3919897"/>
<dbReference type="KEGG" id="sao:SAOUHSC_01452"/>
<dbReference type="PATRIC" id="fig|93061.5.peg.1324"/>
<dbReference type="eggNOG" id="COG0686">
    <property type="taxonomic scope" value="Bacteria"/>
</dbReference>
<dbReference type="HOGENOM" id="CLU_003376_3_0_9"/>
<dbReference type="OrthoDB" id="9804592at2"/>
<dbReference type="UniPathway" id="UPA00527">
    <property type="reaction ID" value="UER00585"/>
</dbReference>
<dbReference type="PRO" id="PR:Q2FYJ2"/>
<dbReference type="Proteomes" id="UP000008816">
    <property type="component" value="Chromosome"/>
</dbReference>
<dbReference type="GO" id="GO:0000286">
    <property type="term" value="F:alanine dehydrogenase activity"/>
    <property type="evidence" value="ECO:0000318"/>
    <property type="project" value="GO_Central"/>
</dbReference>
<dbReference type="GO" id="GO:0006524">
    <property type="term" value="P:alanine catabolic process"/>
    <property type="evidence" value="ECO:0000318"/>
    <property type="project" value="GO_Central"/>
</dbReference>
<dbReference type="GO" id="GO:0042853">
    <property type="term" value="P:L-alanine catabolic process"/>
    <property type="evidence" value="ECO:0007669"/>
    <property type="project" value="UniProtKB-UniPathway"/>
</dbReference>
<dbReference type="CDD" id="cd05305">
    <property type="entry name" value="L-AlaDH"/>
    <property type="match status" value="1"/>
</dbReference>
<dbReference type="FunFam" id="3.40.50.720:FF:000433">
    <property type="entry name" value="Alanine dehydrogenase 1"/>
    <property type="match status" value="1"/>
</dbReference>
<dbReference type="Gene3D" id="3.40.50.720">
    <property type="entry name" value="NAD(P)-binding Rossmann-like Domain"/>
    <property type="match status" value="2"/>
</dbReference>
<dbReference type="InterPro" id="IPR008141">
    <property type="entry name" value="Ala_DH"/>
</dbReference>
<dbReference type="InterPro" id="IPR008143">
    <property type="entry name" value="Ala_DH/PNT_CS2"/>
</dbReference>
<dbReference type="InterPro" id="IPR008142">
    <property type="entry name" value="AlaDH/PNT_CS1"/>
</dbReference>
<dbReference type="InterPro" id="IPR007886">
    <property type="entry name" value="AlaDH/PNT_N"/>
</dbReference>
<dbReference type="InterPro" id="IPR007698">
    <property type="entry name" value="AlaDH/PNT_NAD(H)-bd"/>
</dbReference>
<dbReference type="InterPro" id="IPR036291">
    <property type="entry name" value="NAD(P)-bd_dom_sf"/>
</dbReference>
<dbReference type="NCBIfam" id="TIGR00518">
    <property type="entry name" value="alaDH"/>
    <property type="match status" value="1"/>
</dbReference>
<dbReference type="PANTHER" id="PTHR42795">
    <property type="entry name" value="ALANINE DEHYDROGENASE"/>
    <property type="match status" value="1"/>
</dbReference>
<dbReference type="PANTHER" id="PTHR42795:SF1">
    <property type="entry name" value="ALANINE DEHYDROGENASE"/>
    <property type="match status" value="1"/>
</dbReference>
<dbReference type="Pfam" id="PF01262">
    <property type="entry name" value="AlaDh_PNT_C"/>
    <property type="match status" value="1"/>
</dbReference>
<dbReference type="Pfam" id="PF05222">
    <property type="entry name" value="AlaDh_PNT_N"/>
    <property type="match status" value="1"/>
</dbReference>
<dbReference type="PIRSF" id="PIRSF000183">
    <property type="entry name" value="Alanine_dh"/>
    <property type="match status" value="1"/>
</dbReference>
<dbReference type="SMART" id="SM01002">
    <property type="entry name" value="AlaDh_PNT_C"/>
    <property type="match status" value="1"/>
</dbReference>
<dbReference type="SMART" id="SM01003">
    <property type="entry name" value="AlaDh_PNT_N"/>
    <property type="match status" value="1"/>
</dbReference>
<dbReference type="SUPFAM" id="SSF52283">
    <property type="entry name" value="Formate/glycerate dehydrogenase catalytic domain-like"/>
    <property type="match status" value="1"/>
</dbReference>
<dbReference type="SUPFAM" id="SSF51735">
    <property type="entry name" value="NAD(P)-binding Rossmann-fold domains"/>
    <property type="match status" value="1"/>
</dbReference>
<dbReference type="PROSITE" id="PS00836">
    <property type="entry name" value="ALADH_PNT_1"/>
    <property type="match status" value="1"/>
</dbReference>
<dbReference type="PROSITE" id="PS00837">
    <property type="entry name" value="ALADH_PNT_2"/>
    <property type="match status" value="1"/>
</dbReference>